<protein>
    <recommendedName>
        <fullName evidence="1">ATP-dependent Clp protease adapter protein ClpS</fullName>
    </recommendedName>
</protein>
<feature type="chain" id="PRO_0000300707" description="ATP-dependent Clp protease adapter protein ClpS">
    <location>
        <begin position="1"/>
        <end position="106"/>
    </location>
</feature>
<feature type="region of interest" description="Disordered" evidence="2">
    <location>
        <begin position="1"/>
        <end position="22"/>
    </location>
</feature>
<sequence>MTDEPNQDDPQGPEVEAAKPSLKQPPMYKVVLLNDDYTPMDFVVEVLQRFFNKDRSQATQIMLHVHTRGKGVCGVYSRDVAETKVSQVNDYAREHEHPLLCTMEEA</sequence>
<comment type="function">
    <text evidence="1">Involved in the modulation of the specificity of the ClpAP-mediated ATP-dependent protein degradation.</text>
</comment>
<comment type="subunit">
    <text evidence="1">Binds to the N-terminal domain of the chaperone ClpA.</text>
</comment>
<comment type="similarity">
    <text evidence="1">Belongs to the ClpS family.</text>
</comment>
<proteinExistence type="inferred from homology"/>
<keyword id="KW-1185">Reference proteome</keyword>
<evidence type="ECO:0000255" key="1">
    <source>
        <dbReference type="HAMAP-Rule" id="MF_00302"/>
    </source>
</evidence>
<evidence type="ECO:0000256" key="2">
    <source>
        <dbReference type="SAM" id="MobiDB-lite"/>
    </source>
</evidence>
<organism>
    <name type="scientific">Halorhodospira halophila (strain DSM 244 / SL1)</name>
    <name type="common">Ectothiorhodospira halophila (strain DSM 244 / SL1)</name>
    <dbReference type="NCBI Taxonomy" id="349124"/>
    <lineage>
        <taxon>Bacteria</taxon>
        <taxon>Pseudomonadati</taxon>
        <taxon>Pseudomonadota</taxon>
        <taxon>Gammaproteobacteria</taxon>
        <taxon>Chromatiales</taxon>
        <taxon>Ectothiorhodospiraceae</taxon>
        <taxon>Halorhodospira</taxon>
    </lineage>
</organism>
<accession>A1WWV6</accession>
<dbReference type="EMBL" id="CP000544">
    <property type="protein sequence ID" value="ABM62168.1"/>
    <property type="molecule type" value="Genomic_DNA"/>
</dbReference>
<dbReference type="RefSeq" id="WP_011814190.1">
    <property type="nucleotide sequence ID" value="NC_008789.1"/>
</dbReference>
<dbReference type="SMR" id="A1WWV6"/>
<dbReference type="STRING" id="349124.Hhal_1401"/>
<dbReference type="KEGG" id="hha:Hhal_1401"/>
<dbReference type="eggNOG" id="COG2127">
    <property type="taxonomic scope" value="Bacteria"/>
</dbReference>
<dbReference type="HOGENOM" id="CLU_134358_2_1_6"/>
<dbReference type="OrthoDB" id="9796121at2"/>
<dbReference type="Proteomes" id="UP000000647">
    <property type="component" value="Chromosome"/>
</dbReference>
<dbReference type="GO" id="GO:0030163">
    <property type="term" value="P:protein catabolic process"/>
    <property type="evidence" value="ECO:0007669"/>
    <property type="project" value="InterPro"/>
</dbReference>
<dbReference type="GO" id="GO:0006508">
    <property type="term" value="P:proteolysis"/>
    <property type="evidence" value="ECO:0007669"/>
    <property type="project" value="UniProtKB-UniRule"/>
</dbReference>
<dbReference type="FunFam" id="3.30.1390.10:FF:000002">
    <property type="entry name" value="ATP-dependent Clp protease adapter protein ClpS"/>
    <property type="match status" value="1"/>
</dbReference>
<dbReference type="Gene3D" id="3.30.1390.10">
    <property type="match status" value="1"/>
</dbReference>
<dbReference type="HAMAP" id="MF_00302">
    <property type="entry name" value="ClpS"/>
    <property type="match status" value="1"/>
</dbReference>
<dbReference type="InterPro" id="IPR022935">
    <property type="entry name" value="ClpS"/>
</dbReference>
<dbReference type="InterPro" id="IPR003769">
    <property type="entry name" value="ClpS_core"/>
</dbReference>
<dbReference type="InterPro" id="IPR014719">
    <property type="entry name" value="Ribosomal_bL12_C/ClpS-like"/>
</dbReference>
<dbReference type="NCBIfam" id="NF000669">
    <property type="entry name" value="PRK00033.1-2"/>
    <property type="match status" value="1"/>
</dbReference>
<dbReference type="NCBIfam" id="NF000670">
    <property type="entry name" value="PRK00033.1-3"/>
    <property type="match status" value="1"/>
</dbReference>
<dbReference type="NCBIfam" id="NF000672">
    <property type="entry name" value="PRK00033.1-5"/>
    <property type="match status" value="1"/>
</dbReference>
<dbReference type="PANTHER" id="PTHR33473:SF19">
    <property type="entry name" value="ATP-DEPENDENT CLP PROTEASE ADAPTER PROTEIN CLPS"/>
    <property type="match status" value="1"/>
</dbReference>
<dbReference type="PANTHER" id="PTHR33473">
    <property type="entry name" value="ATP-DEPENDENT CLP PROTEASE ADAPTER PROTEIN CLPS1, CHLOROPLASTIC"/>
    <property type="match status" value="1"/>
</dbReference>
<dbReference type="Pfam" id="PF02617">
    <property type="entry name" value="ClpS"/>
    <property type="match status" value="1"/>
</dbReference>
<dbReference type="SUPFAM" id="SSF54736">
    <property type="entry name" value="ClpS-like"/>
    <property type="match status" value="1"/>
</dbReference>
<name>CLPS_HALHL</name>
<gene>
    <name evidence="1" type="primary">clpS</name>
    <name type="ordered locus">Hhal_1401</name>
</gene>
<reference key="1">
    <citation type="submission" date="2006-12" db="EMBL/GenBank/DDBJ databases">
        <title>Complete sequence of Halorhodospira halophila SL1.</title>
        <authorList>
            <consortium name="US DOE Joint Genome Institute"/>
            <person name="Copeland A."/>
            <person name="Lucas S."/>
            <person name="Lapidus A."/>
            <person name="Barry K."/>
            <person name="Detter J.C."/>
            <person name="Glavina del Rio T."/>
            <person name="Hammon N."/>
            <person name="Israni S."/>
            <person name="Dalin E."/>
            <person name="Tice H."/>
            <person name="Pitluck S."/>
            <person name="Saunders E."/>
            <person name="Brettin T."/>
            <person name="Bruce D."/>
            <person name="Han C."/>
            <person name="Tapia R."/>
            <person name="Schmutz J."/>
            <person name="Larimer F."/>
            <person name="Land M."/>
            <person name="Hauser L."/>
            <person name="Kyrpides N."/>
            <person name="Mikhailova N."/>
            <person name="Hoff W."/>
            <person name="Richardson P."/>
        </authorList>
    </citation>
    <scope>NUCLEOTIDE SEQUENCE [LARGE SCALE GENOMIC DNA]</scope>
    <source>
        <strain>DSM 244 / SL1</strain>
    </source>
</reference>